<proteinExistence type="inferred from homology"/>
<evidence type="ECO:0000255" key="1">
    <source>
        <dbReference type="HAMAP-Rule" id="MF_00061"/>
    </source>
</evidence>
<feature type="chain" id="PRO_0000235082" description="4-diphosphocytidyl-2-C-methyl-D-erythritol kinase">
    <location>
        <begin position="1"/>
        <end position="300"/>
    </location>
</feature>
<feature type="active site" evidence="1">
    <location>
        <position position="22"/>
    </location>
</feature>
<feature type="active site" evidence="1">
    <location>
        <position position="147"/>
    </location>
</feature>
<feature type="binding site" evidence="1">
    <location>
        <begin position="105"/>
        <end position="115"/>
    </location>
    <ligand>
        <name>ATP</name>
        <dbReference type="ChEBI" id="CHEBI:30616"/>
    </ligand>
</feature>
<organism>
    <name type="scientific">Colwellia psychrerythraea (strain 34H / ATCC BAA-681)</name>
    <name type="common">Vibrio psychroerythus</name>
    <dbReference type="NCBI Taxonomy" id="167879"/>
    <lineage>
        <taxon>Bacteria</taxon>
        <taxon>Pseudomonadati</taxon>
        <taxon>Pseudomonadota</taxon>
        <taxon>Gammaproteobacteria</taxon>
        <taxon>Alteromonadales</taxon>
        <taxon>Colwelliaceae</taxon>
        <taxon>Colwellia</taxon>
    </lineage>
</organism>
<gene>
    <name evidence="1" type="primary">ispE</name>
    <name type="ordered locus">CPS_3556</name>
</gene>
<name>ISPE_COLP3</name>
<comment type="function">
    <text evidence="1">Catalyzes the phosphorylation of the position 2 hydroxy group of 4-diphosphocytidyl-2C-methyl-D-erythritol.</text>
</comment>
<comment type="catalytic activity">
    <reaction evidence="1">
        <text>4-CDP-2-C-methyl-D-erythritol + ATP = 4-CDP-2-C-methyl-D-erythritol 2-phosphate + ADP + H(+)</text>
        <dbReference type="Rhea" id="RHEA:18437"/>
        <dbReference type="ChEBI" id="CHEBI:15378"/>
        <dbReference type="ChEBI" id="CHEBI:30616"/>
        <dbReference type="ChEBI" id="CHEBI:57823"/>
        <dbReference type="ChEBI" id="CHEBI:57919"/>
        <dbReference type="ChEBI" id="CHEBI:456216"/>
        <dbReference type="EC" id="2.7.1.148"/>
    </reaction>
</comment>
<comment type="pathway">
    <text evidence="1">Isoprenoid biosynthesis; isopentenyl diphosphate biosynthesis via DXP pathway; isopentenyl diphosphate from 1-deoxy-D-xylulose 5-phosphate: step 3/6.</text>
</comment>
<comment type="similarity">
    <text evidence="1">Belongs to the GHMP kinase family. IspE subfamily.</text>
</comment>
<reference key="1">
    <citation type="journal article" date="2005" name="Proc. Natl. Acad. Sci. U.S.A.">
        <title>The psychrophilic lifestyle as revealed by the genome sequence of Colwellia psychrerythraea 34H through genomic and proteomic analyses.</title>
        <authorList>
            <person name="Methe B.A."/>
            <person name="Nelson K.E."/>
            <person name="Deming J.W."/>
            <person name="Momen B."/>
            <person name="Melamud E."/>
            <person name="Zhang X."/>
            <person name="Moult J."/>
            <person name="Madupu R."/>
            <person name="Nelson W.C."/>
            <person name="Dodson R.J."/>
            <person name="Brinkac L.M."/>
            <person name="Daugherty S.C."/>
            <person name="Durkin A.S."/>
            <person name="DeBoy R.T."/>
            <person name="Kolonay J.F."/>
            <person name="Sullivan S.A."/>
            <person name="Zhou L."/>
            <person name="Davidsen T.M."/>
            <person name="Wu M."/>
            <person name="Huston A.L."/>
            <person name="Lewis M."/>
            <person name="Weaver B."/>
            <person name="Weidman J.F."/>
            <person name="Khouri H."/>
            <person name="Utterback T.R."/>
            <person name="Feldblyum T.V."/>
            <person name="Fraser C.M."/>
        </authorList>
    </citation>
    <scope>NUCLEOTIDE SEQUENCE [LARGE SCALE GENOMIC DNA]</scope>
    <source>
        <strain>34H / ATCC BAA-681</strain>
    </source>
</reference>
<dbReference type="EC" id="2.7.1.148" evidence="1"/>
<dbReference type="EMBL" id="CP000083">
    <property type="protein sequence ID" value="AAZ26017.1"/>
    <property type="molecule type" value="Genomic_DNA"/>
</dbReference>
<dbReference type="RefSeq" id="WP_011044316.1">
    <property type="nucleotide sequence ID" value="NC_003910.7"/>
</dbReference>
<dbReference type="SMR" id="Q47Y90"/>
<dbReference type="STRING" id="167879.CPS_3556"/>
<dbReference type="KEGG" id="cps:CPS_3556"/>
<dbReference type="HOGENOM" id="CLU_053057_3_0_6"/>
<dbReference type="UniPathway" id="UPA00056">
    <property type="reaction ID" value="UER00094"/>
</dbReference>
<dbReference type="Proteomes" id="UP000000547">
    <property type="component" value="Chromosome"/>
</dbReference>
<dbReference type="GO" id="GO:0050515">
    <property type="term" value="F:4-(cytidine 5'-diphospho)-2-C-methyl-D-erythritol kinase activity"/>
    <property type="evidence" value="ECO:0007669"/>
    <property type="project" value="UniProtKB-UniRule"/>
</dbReference>
<dbReference type="GO" id="GO:0005524">
    <property type="term" value="F:ATP binding"/>
    <property type="evidence" value="ECO:0007669"/>
    <property type="project" value="UniProtKB-UniRule"/>
</dbReference>
<dbReference type="GO" id="GO:0019288">
    <property type="term" value="P:isopentenyl diphosphate biosynthetic process, methylerythritol 4-phosphate pathway"/>
    <property type="evidence" value="ECO:0007669"/>
    <property type="project" value="UniProtKB-UniRule"/>
</dbReference>
<dbReference type="GO" id="GO:0016114">
    <property type="term" value="P:terpenoid biosynthetic process"/>
    <property type="evidence" value="ECO:0007669"/>
    <property type="project" value="InterPro"/>
</dbReference>
<dbReference type="Gene3D" id="3.30.230.10">
    <property type="match status" value="1"/>
</dbReference>
<dbReference type="Gene3D" id="3.30.70.890">
    <property type="entry name" value="GHMP kinase, C-terminal domain"/>
    <property type="match status" value="1"/>
</dbReference>
<dbReference type="HAMAP" id="MF_00061">
    <property type="entry name" value="IspE"/>
    <property type="match status" value="1"/>
</dbReference>
<dbReference type="InterPro" id="IPR013750">
    <property type="entry name" value="GHMP_kinase_C_dom"/>
</dbReference>
<dbReference type="InterPro" id="IPR036554">
    <property type="entry name" value="GHMP_kinase_C_sf"/>
</dbReference>
<dbReference type="InterPro" id="IPR006204">
    <property type="entry name" value="GHMP_kinase_N_dom"/>
</dbReference>
<dbReference type="InterPro" id="IPR004424">
    <property type="entry name" value="IspE"/>
</dbReference>
<dbReference type="InterPro" id="IPR020568">
    <property type="entry name" value="Ribosomal_Su5_D2-typ_SF"/>
</dbReference>
<dbReference type="InterPro" id="IPR014721">
    <property type="entry name" value="Ribsml_uS5_D2-typ_fold_subgr"/>
</dbReference>
<dbReference type="NCBIfam" id="TIGR00154">
    <property type="entry name" value="ispE"/>
    <property type="match status" value="1"/>
</dbReference>
<dbReference type="PANTHER" id="PTHR43527">
    <property type="entry name" value="4-DIPHOSPHOCYTIDYL-2-C-METHYL-D-ERYTHRITOL KINASE, CHLOROPLASTIC"/>
    <property type="match status" value="1"/>
</dbReference>
<dbReference type="PANTHER" id="PTHR43527:SF2">
    <property type="entry name" value="4-DIPHOSPHOCYTIDYL-2-C-METHYL-D-ERYTHRITOL KINASE, CHLOROPLASTIC"/>
    <property type="match status" value="1"/>
</dbReference>
<dbReference type="Pfam" id="PF08544">
    <property type="entry name" value="GHMP_kinases_C"/>
    <property type="match status" value="1"/>
</dbReference>
<dbReference type="Pfam" id="PF00288">
    <property type="entry name" value="GHMP_kinases_N"/>
    <property type="match status" value="1"/>
</dbReference>
<dbReference type="PIRSF" id="PIRSF010376">
    <property type="entry name" value="IspE"/>
    <property type="match status" value="1"/>
</dbReference>
<dbReference type="SUPFAM" id="SSF55060">
    <property type="entry name" value="GHMP Kinase, C-terminal domain"/>
    <property type="match status" value="1"/>
</dbReference>
<dbReference type="SUPFAM" id="SSF54211">
    <property type="entry name" value="Ribosomal protein S5 domain 2-like"/>
    <property type="match status" value="1"/>
</dbReference>
<protein>
    <recommendedName>
        <fullName evidence="1">4-diphosphocytidyl-2-C-methyl-D-erythritol kinase</fullName>
        <shortName evidence="1">CMK</shortName>
        <ecNumber evidence="1">2.7.1.148</ecNumber>
    </recommendedName>
    <alternativeName>
        <fullName evidence="1">4-(cytidine-5'-diphospho)-2-C-methyl-D-erythritol kinase</fullName>
    </alternativeName>
</protein>
<sequence length="300" mass="32513">MTCASNSNSFLNKAIEFPSPAKINLFLHIVGQREDGYHNLETLFQFIDHSDTLTLTATETPDIELLTPIDGVNNDDNLIVKAARLLKNRSNTDLGVKISINKILPMGGGLGGGSSNAATVLVALNLLWQCEFSLSELSSLGLSLGADVPIFIHGFSAFAQGVGDHLTAIKPQESWYLITKPECSISTKEIFTAVDLPRNTKKLDPTALNTSDFVTESFHNDCQTLVIKQYPEVAKLLAWLVEYAPSRMTGTGACVFTQFSSYQEARSLQAKLPKGISSFVAQGLNKSPLCSVIAKLSLSE</sequence>
<keyword id="KW-0067">ATP-binding</keyword>
<keyword id="KW-0414">Isoprene biosynthesis</keyword>
<keyword id="KW-0418">Kinase</keyword>
<keyword id="KW-0547">Nucleotide-binding</keyword>
<keyword id="KW-0808">Transferase</keyword>
<accession>Q47Y90</accession>